<evidence type="ECO:0000305" key="1"/>
<gene>
    <name type="primary">MT1</name>
</gene>
<comment type="function">
    <text>Metallothioneins have a high content of cysteine residues that bind various heavy metals.</text>
</comment>
<comment type="similarity">
    <text evidence="1">Belongs to the metallothionein superfamily. Type 15 family.</text>
</comment>
<feature type="chain" id="PRO_0000197374" description="Metallothionein-like protein 1">
    <location>
        <begin position="1"/>
        <end position="71"/>
    </location>
</feature>
<proteinExistence type="inferred from homology"/>
<name>MT1_CASGL</name>
<reference key="1">
    <citation type="submission" date="1996-03" db="EMBL/GenBank/DDBJ databases">
        <title>A metallothionein gene is expressed in Frankia infected cells and in the pericycle of Casuarina glauca root nodules.</title>
        <authorList>
            <person name="Gherbi H."/>
            <person name="Duhoux E."/>
            <person name="Nassar A."/>
            <person name="Franche C."/>
            <person name="Pawlowski K."/>
            <person name="Bogusz D."/>
        </authorList>
    </citation>
    <scope>NUCLEOTIDE SEQUENCE [MRNA]</scope>
    <source>
        <tissue>Root nodule</tissue>
    </source>
</reference>
<organism>
    <name type="scientific">Casuarina glauca</name>
    <name type="common">Swamp oak</name>
    <dbReference type="NCBI Taxonomy" id="3522"/>
    <lineage>
        <taxon>Eukaryota</taxon>
        <taxon>Viridiplantae</taxon>
        <taxon>Streptophyta</taxon>
        <taxon>Embryophyta</taxon>
        <taxon>Tracheophyta</taxon>
        <taxon>Spermatophyta</taxon>
        <taxon>Magnoliopsida</taxon>
        <taxon>eudicotyledons</taxon>
        <taxon>Gunneridae</taxon>
        <taxon>Pentapetalae</taxon>
        <taxon>rosids</taxon>
        <taxon>fabids</taxon>
        <taxon>Fagales</taxon>
        <taxon>Casuarinaceae</taxon>
        <taxon>Casuarina</taxon>
    </lineage>
</organism>
<accession>Q39511</accession>
<keyword id="KW-0479">Metal-binding</keyword>
<keyword id="KW-0480">Metal-thiolate cluster</keyword>
<dbReference type="EMBL" id="X96483">
    <property type="protein sequence ID" value="CAA65338.1"/>
    <property type="molecule type" value="mRNA"/>
</dbReference>
<dbReference type="PIR" id="T09587">
    <property type="entry name" value="T09587"/>
</dbReference>
<dbReference type="GO" id="GO:0046872">
    <property type="term" value="F:metal ion binding"/>
    <property type="evidence" value="ECO:0007669"/>
    <property type="project" value="UniProtKB-KW"/>
</dbReference>
<dbReference type="InterPro" id="IPR000347">
    <property type="entry name" value="Metalthion_15p"/>
</dbReference>
<dbReference type="PANTHER" id="PTHR33543">
    <property type="entry name" value="METALLOTHIONEIN-LIKE PROTEIN 2A"/>
    <property type="match status" value="1"/>
</dbReference>
<dbReference type="PANTHER" id="PTHR33543:SF37">
    <property type="entry name" value="METALLOTHIONEIN-LIKE PROTEIN 4B"/>
    <property type="match status" value="1"/>
</dbReference>
<dbReference type="Pfam" id="PF01439">
    <property type="entry name" value="Metallothio_2"/>
    <property type="match status" value="1"/>
</dbReference>
<sequence>MSSCGCGSGCSCGSGCNCKNPVLGLSEKTTSKTIVADVAPVKSHPEGSEMSVEGGHGCKCGSSCNCDPCNC</sequence>
<protein>
    <recommendedName>
        <fullName>Metallothionein-like protein 1</fullName>
        <shortName>MT-1</shortName>
    </recommendedName>
</protein>